<evidence type="ECO:0000255" key="1">
    <source>
        <dbReference type="HAMAP-Rule" id="MF_01039"/>
    </source>
</evidence>
<organism>
    <name type="scientific">Staphylococcus aureus (strain Mu3 / ATCC 700698)</name>
    <dbReference type="NCBI Taxonomy" id="418127"/>
    <lineage>
        <taxon>Bacteria</taxon>
        <taxon>Bacillati</taxon>
        <taxon>Bacillota</taxon>
        <taxon>Bacilli</taxon>
        <taxon>Bacillales</taxon>
        <taxon>Staphylococcaceae</taxon>
        <taxon>Staphylococcus</taxon>
    </lineage>
</organism>
<keyword id="KW-0312">Gluconeogenesis</keyword>
<keyword id="KW-0324">Glycolysis</keyword>
<keyword id="KW-0413">Isomerase</keyword>
<sequence length="228" mass="26680">MPKLILCRHGQSEWNAKNLFTGWEDVNLSEQGINEATRAGEKVRENNIAIDVAFTSLLTRALDTTHYILTESKQQWIPVYKSWRLNERHYGGLQGLNKDDARKEFGEEQVHIWRRSYDVKPPAETEEQREAYLADRRYNHLDKRMMPYSESLKDTLVRVIPFWTDHISQYLLDGQTVLVSAHGNSIRALIKYLEDVSDEDIINYEIKTGAPLVYELTDDLEVIDKYYL</sequence>
<name>GPMA_STAA1</name>
<proteinExistence type="inferred from homology"/>
<protein>
    <recommendedName>
        <fullName evidence="1">2,3-bisphosphoglycerate-dependent phosphoglycerate mutase</fullName>
        <shortName evidence="1">BPG-dependent PGAM</shortName>
        <shortName evidence="1">PGAM</shortName>
        <shortName evidence="1">Phosphoglyceromutase</shortName>
        <shortName evidence="1">dPGM</shortName>
        <ecNumber evidence="1">5.4.2.11</ecNumber>
    </recommendedName>
</protein>
<dbReference type="EC" id="5.4.2.11" evidence="1"/>
<dbReference type="EMBL" id="AP009324">
    <property type="protein sequence ID" value="BAF79283.1"/>
    <property type="molecule type" value="Genomic_DNA"/>
</dbReference>
<dbReference type="RefSeq" id="WP_001125208.1">
    <property type="nucleotide sequence ID" value="NZ_CTYB01000005.1"/>
</dbReference>
<dbReference type="SMR" id="A7X656"/>
<dbReference type="KEGG" id="saw:SAHV_2400"/>
<dbReference type="HOGENOM" id="CLU_033323_1_5_9"/>
<dbReference type="UniPathway" id="UPA00109">
    <property type="reaction ID" value="UER00186"/>
</dbReference>
<dbReference type="GO" id="GO:0004619">
    <property type="term" value="F:phosphoglycerate mutase activity"/>
    <property type="evidence" value="ECO:0007669"/>
    <property type="project" value="UniProtKB-EC"/>
</dbReference>
<dbReference type="GO" id="GO:0006094">
    <property type="term" value="P:gluconeogenesis"/>
    <property type="evidence" value="ECO:0007669"/>
    <property type="project" value="UniProtKB-UniRule"/>
</dbReference>
<dbReference type="GO" id="GO:0006096">
    <property type="term" value="P:glycolytic process"/>
    <property type="evidence" value="ECO:0007669"/>
    <property type="project" value="UniProtKB-UniRule"/>
</dbReference>
<dbReference type="CDD" id="cd07067">
    <property type="entry name" value="HP_PGM_like"/>
    <property type="match status" value="1"/>
</dbReference>
<dbReference type="FunFam" id="3.40.50.1240:FF:000003">
    <property type="entry name" value="2,3-bisphosphoglycerate-dependent phosphoglycerate mutase"/>
    <property type="match status" value="1"/>
</dbReference>
<dbReference type="Gene3D" id="3.40.50.1240">
    <property type="entry name" value="Phosphoglycerate mutase-like"/>
    <property type="match status" value="1"/>
</dbReference>
<dbReference type="HAMAP" id="MF_01039">
    <property type="entry name" value="PGAM_GpmA"/>
    <property type="match status" value="1"/>
</dbReference>
<dbReference type="InterPro" id="IPR013078">
    <property type="entry name" value="His_Pase_superF_clade-1"/>
</dbReference>
<dbReference type="InterPro" id="IPR029033">
    <property type="entry name" value="His_PPase_superfam"/>
</dbReference>
<dbReference type="InterPro" id="IPR001345">
    <property type="entry name" value="PG/BPGM_mutase_AS"/>
</dbReference>
<dbReference type="InterPro" id="IPR005952">
    <property type="entry name" value="Phosphogly_mut1"/>
</dbReference>
<dbReference type="NCBIfam" id="TIGR01258">
    <property type="entry name" value="pgm_1"/>
    <property type="match status" value="1"/>
</dbReference>
<dbReference type="NCBIfam" id="NF010713">
    <property type="entry name" value="PRK14115.1"/>
    <property type="match status" value="1"/>
</dbReference>
<dbReference type="NCBIfam" id="NF010717">
    <property type="entry name" value="PRK14119.1"/>
    <property type="match status" value="1"/>
</dbReference>
<dbReference type="PANTHER" id="PTHR11931">
    <property type="entry name" value="PHOSPHOGLYCERATE MUTASE"/>
    <property type="match status" value="1"/>
</dbReference>
<dbReference type="Pfam" id="PF00300">
    <property type="entry name" value="His_Phos_1"/>
    <property type="match status" value="1"/>
</dbReference>
<dbReference type="PIRSF" id="PIRSF000709">
    <property type="entry name" value="6PFK_2-Ptase"/>
    <property type="match status" value="1"/>
</dbReference>
<dbReference type="SMART" id="SM00855">
    <property type="entry name" value="PGAM"/>
    <property type="match status" value="1"/>
</dbReference>
<dbReference type="SUPFAM" id="SSF53254">
    <property type="entry name" value="Phosphoglycerate mutase-like"/>
    <property type="match status" value="1"/>
</dbReference>
<dbReference type="PROSITE" id="PS00175">
    <property type="entry name" value="PG_MUTASE"/>
    <property type="match status" value="1"/>
</dbReference>
<accession>A7X656</accession>
<gene>
    <name evidence="1" type="primary">gpmA</name>
    <name type="ordered locus">SAHV_2400</name>
</gene>
<feature type="chain" id="PRO_1000064101" description="2,3-bisphosphoglycerate-dependent phosphoglycerate mutase">
    <location>
        <begin position="1"/>
        <end position="228"/>
    </location>
</feature>
<feature type="active site" description="Tele-phosphohistidine intermediate" evidence="1">
    <location>
        <position position="9"/>
    </location>
</feature>
<feature type="active site" description="Proton donor/acceptor" evidence="1">
    <location>
        <position position="87"/>
    </location>
</feature>
<feature type="binding site" evidence="1">
    <location>
        <begin position="8"/>
        <end position="15"/>
    </location>
    <ligand>
        <name>substrate</name>
    </ligand>
</feature>
<feature type="binding site" evidence="1">
    <location>
        <begin position="21"/>
        <end position="22"/>
    </location>
    <ligand>
        <name>substrate</name>
    </ligand>
</feature>
<feature type="binding site" evidence="1">
    <location>
        <position position="60"/>
    </location>
    <ligand>
        <name>substrate</name>
    </ligand>
</feature>
<feature type="binding site" evidence="1">
    <location>
        <begin position="87"/>
        <end position="90"/>
    </location>
    <ligand>
        <name>substrate</name>
    </ligand>
</feature>
<feature type="binding site" evidence="1">
    <location>
        <position position="98"/>
    </location>
    <ligand>
        <name>substrate</name>
    </ligand>
</feature>
<feature type="binding site" evidence="1">
    <location>
        <begin position="114"/>
        <end position="115"/>
    </location>
    <ligand>
        <name>substrate</name>
    </ligand>
</feature>
<feature type="binding site" evidence="1">
    <location>
        <begin position="183"/>
        <end position="184"/>
    </location>
    <ligand>
        <name>substrate</name>
    </ligand>
</feature>
<feature type="site" description="Transition state stabilizer" evidence="1">
    <location>
        <position position="182"/>
    </location>
</feature>
<reference key="1">
    <citation type="journal article" date="2008" name="Antimicrob. Agents Chemother.">
        <title>Mutated response regulator graR is responsible for phenotypic conversion of Staphylococcus aureus from heterogeneous vancomycin-intermediate resistance to vancomycin-intermediate resistance.</title>
        <authorList>
            <person name="Neoh H.-M."/>
            <person name="Cui L."/>
            <person name="Yuzawa H."/>
            <person name="Takeuchi F."/>
            <person name="Matsuo M."/>
            <person name="Hiramatsu K."/>
        </authorList>
    </citation>
    <scope>NUCLEOTIDE SEQUENCE [LARGE SCALE GENOMIC DNA]</scope>
    <source>
        <strain>Mu3 / ATCC 700698</strain>
    </source>
</reference>
<comment type="function">
    <text evidence="1">Catalyzes the interconversion of 2-phosphoglycerate and 3-phosphoglycerate.</text>
</comment>
<comment type="catalytic activity">
    <reaction evidence="1">
        <text>(2R)-2-phosphoglycerate = (2R)-3-phosphoglycerate</text>
        <dbReference type="Rhea" id="RHEA:15901"/>
        <dbReference type="ChEBI" id="CHEBI:58272"/>
        <dbReference type="ChEBI" id="CHEBI:58289"/>
        <dbReference type="EC" id="5.4.2.11"/>
    </reaction>
</comment>
<comment type="pathway">
    <text evidence="1">Carbohydrate degradation; glycolysis; pyruvate from D-glyceraldehyde 3-phosphate: step 3/5.</text>
</comment>
<comment type="similarity">
    <text evidence="1">Belongs to the phosphoglycerate mutase family. BPG-dependent PGAM subfamily.</text>
</comment>